<organism>
    <name type="scientific">Phaeosphaeria nodorum (strain SN15 / ATCC MYA-4574 / FGSC 10173)</name>
    <name type="common">Glume blotch fungus</name>
    <name type="synonym">Parastagonospora nodorum</name>
    <dbReference type="NCBI Taxonomy" id="321614"/>
    <lineage>
        <taxon>Eukaryota</taxon>
        <taxon>Fungi</taxon>
        <taxon>Dikarya</taxon>
        <taxon>Ascomycota</taxon>
        <taxon>Pezizomycotina</taxon>
        <taxon>Dothideomycetes</taxon>
        <taxon>Pleosporomycetidae</taxon>
        <taxon>Pleosporales</taxon>
        <taxon>Pleosporineae</taxon>
        <taxon>Phaeosphaeriaceae</taxon>
        <taxon>Parastagonospora</taxon>
    </lineage>
</organism>
<comment type="function">
    <text evidence="1">Component of the cytosolic iron-sulfur (Fe/S) protein assembly (CIA) machinery. Required for maturation of extramitochondrial Fe-S proteins. The NBP35-CFD1 heterotetramer forms a Fe-S scaffold complex, mediating the de novo assembly of an Fe-S cluster and its transfer to target apoproteins.</text>
</comment>
<comment type="cofactor">
    <cofactor evidence="1">
        <name>[4Fe-4S] cluster</name>
        <dbReference type="ChEBI" id="CHEBI:49883"/>
    </cofactor>
    <text evidence="1">Binds 4 [4Fe-4S] clusters per heterotetramer. Contains two stable clusters in the N-termini of NBP35 and two labile, bridging clusters between subunits of the NBP35-CFD1 heterotetramer.</text>
</comment>
<comment type="subunit">
    <text evidence="1">Heterotetramer of 2 NBP35 and 2 CFD1 chains.</text>
</comment>
<comment type="subcellular location">
    <subcellularLocation>
        <location evidence="1">Cytoplasm</location>
    </subcellularLocation>
</comment>
<comment type="similarity">
    <text evidence="1">Belongs to the Mrp/NBP35 ATP-binding proteins family. NUBP1/NBP35 subfamily.</text>
</comment>
<comment type="sequence caution" evidence="2">
    <conflict type="erroneous gene model prediction">
        <sequence resource="EMBL-CDS" id="EAT83726"/>
    </conflict>
</comment>
<name>NBP35_PHANO</name>
<feature type="chain" id="PRO_0000278901" description="Cytosolic Fe-S cluster assembly factor NBP35">
    <location>
        <begin position="1"/>
        <end position="340"/>
    </location>
</feature>
<feature type="binding site" evidence="1">
    <location>
        <position position="31"/>
    </location>
    <ligand>
        <name>[4Fe-4S] cluster</name>
        <dbReference type="ChEBI" id="CHEBI:49883"/>
        <label>1</label>
    </ligand>
</feature>
<feature type="binding site" evidence="1">
    <location>
        <position position="45"/>
    </location>
    <ligand>
        <name>[4Fe-4S] cluster</name>
        <dbReference type="ChEBI" id="CHEBI:49883"/>
        <label>1</label>
    </ligand>
</feature>
<feature type="binding site" evidence="1">
    <location>
        <position position="48"/>
    </location>
    <ligand>
        <name>[4Fe-4S] cluster</name>
        <dbReference type="ChEBI" id="CHEBI:49883"/>
        <label>1</label>
    </ligand>
</feature>
<feature type="binding site" evidence="1">
    <location>
        <position position="54"/>
    </location>
    <ligand>
        <name>[4Fe-4S] cluster</name>
        <dbReference type="ChEBI" id="CHEBI:49883"/>
        <label>1</label>
    </ligand>
</feature>
<feature type="binding site" evidence="1">
    <location>
        <begin position="84"/>
        <end position="91"/>
    </location>
    <ligand>
        <name>ATP</name>
        <dbReference type="ChEBI" id="CHEBI:30616"/>
    </ligand>
</feature>
<feature type="binding site" evidence="1">
    <location>
        <position position="257"/>
    </location>
    <ligand>
        <name>[4Fe-4S] cluster</name>
        <dbReference type="ChEBI" id="CHEBI:49883"/>
        <label>2</label>
        <note>ligand shared with heterodimeric partner</note>
    </ligand>
</feature>
<feature type="binding site" evidence="1">
    <location>
        <position position="260"/>
    </location>
    <ligand>
        <name>[4Fe-4S] cluster</name>
        <dbReference type="ChEBI" id="CHEBI:49883"/>
        <label>2</label>
        <note>ligand shared with heterodimeric partner</note>
    </ligand>
</feature>
<keyword id="KW-0004">4Fe-4S</keyword>
<keyword id="KW-0067">ATP-binding</keyword>
<keyword id="KW-0963">Cytoplasm</keyword>
<keyword id="KW-0408">Iron</keyword>
<keyword id="KW-0411">Iron-sulfur</keyword>
<keyword id="KW-0479">Metal-binding</keyword>
<keyword id="KW-0547">Nucleotide-binding</keyword>
<protein>
    <recommendedName>
        <fullName evidence="1">Cytosolic Fe-S cluster assembly factor NBP35</fullName>
    </recommendedName>
    <alternativeName>
        <fullName evidence="1">Nucleotide-binding protein 35</fullName>
    </alternativeName>
</protein>
<sequence length="340" mass="36251">MAPSLEEPTQIDFNAPLKAAPKLVAPEPEHCPGPESQQAGTADNCAGCPNQAICASAPKGPDPDIPLITARLSSVKHKILVLSGKGGVGKSTFSTMLSHGFSANPDSTVGLMDTDICGPSIPKMMGVEEETIHTTADGWEPVWVSENLGVMSVQFMLPNRDDAVIWRGPKKNGLIKKFLMDVKWGELDFLIVDTPPGTSDEHLSVNSFLKASGVDGAVLVTTPQEVALLDVRKEIDFCRKASIPILGIVENMSGFVCPGCKHESQIFRASTGGARKLAKEENIPFLGAVPLDPRIGMACDYGESFLTAYPDSPACAAIRDVVRRVGVEMGLEADEVLPEE</sequence>
<accession>Q0UI56</accession>
<proteinExistence type="inferred from homology"/>
<gene>
    <name evidence="1" type="primary">NBP35</name>
    <name type="ORF">SNOG_08558</name>
</gene>
<evidence type="ECO:0000255" key="1">
    <source>
        <dbReference type="HAMAP-Rule" id="MF_03038"/>
    </source>
</evidence>
<evidence type="ECO:0000305" key="2"/>
<reference key="1">
    <citation type="journal article" date="2007" name="Plant Cell">
        <title>Dothideomycete-plant interactions illuminated by genome sequencing and EST analysis of the wheat pathogen Stagonospora nodorum.</title>
        <authorList>
            <person name="Hane J.K."/>
            <person name="Lowe R.G.T."/>
            <person name="Solomon P.S."/>
            <person name="Tan K.-C."/>
            <person name="Schoch C.L."/>
            <person name="Spatafora J.W."/>
            <person name="Crous P.W."/>
            <person name="Kodira C.D."/>
            <person name="Birren B.W."/>
            <person name="Galagan J.E."/>
            <person name="Torriani S.F.F."/>
            <person name="McDonald B.A."/>
            <person name="Oliver R.P."/>
        </authorList>
    </citation>
    <scope>NUCLEOTIDE SEQUENCE [LARGE SCALE GENOMIC DNA]</scope>
    <source>
        <strain>SN15 / ATCC MYA-4574 / FGSC 10173</strain>
    </source>
</reference>
<dbReference type="EMBL" id="CH445337">
    <property type="protein sequence ID" value="EAT83726.2"/>
    <property type="status" value="ALT_SEQ"/>
    <property type="molecule type" value="Genomic_DNA"/>
</dbReference>
<dbReference type="RefSeq" id="XP_001798868.1">
    <property type="nucleotide sequence ID" value="XM_001798816.1"/>
</dbReference>
<dbReference type="SMR" id="Q0UI56"/>
<dbReference type="FunCoup" id="Q0UI56">
    <property type="interactions" value="547"/>
</dbReference>
<dbReference type="STRING" id="321614.Q0UI56"/>
<dbReference type="GeneID" id="5975767"/>
<dbReference type="KEGG" id="pno:SNOG_08558"/>
<dbReference type="VEuPathDB" id="FungiDB:JI435_085580"/>
<dbReference type="eggNOG" id="KOG3022">
    <property type="taxonomic scope" value="Eukaryota"/>
</dbReference>
<dbReference type="InParanoid" id="Q0UI56"/>
<dbReference type="OMA" id="VSGCPMR"/>
<dbReference type="OrthoDB" id="1741334at2759"/>
<dbReference type="Proteomes" id="UP000001055">
    <property type="component" value="Unassembled WGS sequence"/>
</dbReference>
<dbReference type="GO" id="GO:0005829">
    <property type="term" value="C:cytosol"/>
    <property type="evidence" value="ECO:0000318"/>
    <property type="project" value="GO_Central"/>
</dbReference>
<dbReference type="GO" id="GO:0051539">
    <property type="term" value="F:4 iron, 4 sulfur cluster binding"/>
    <property type="evidence" value="ECO:0007669"/>
    <property type="project" value="UniProtKB-UniRule"/>
</dbReference>
<dbReference type="GO" id="GO:0005524">
    <property type="term" value="F:ATP binding"/>
    <property type="evidence" value="ECO:0007669"/>
    <property type="project" value="UniProtKB-KW"/>
</dbReference>
<dbReference type="GO" id="GO:0140663">
    <property type="term" value="F:ATP-dependent FeS chaperone activity"/>
    <property type="evidence" value="ECO:0007669"/>
    <property type="project" value="InterPro"/>
</dbReference>
<dbReference type="GO" id="GO:0051536">
    <property type="term" value="F:iron-sulfur cluster binding"/>
    <property type="evidence" value="ECO:0000318"/>
    <property type="project" value="GO_Central"/>
</dbReference>
<dbReference type="GO" id="GO:0046872">
    <property type="term" value="F:metal ion binding"/>
    <property type="evidence" value="ECO:0007669"/>
    <property type="project" value="UniProtKB-KW"/>
</dbReference>
<dbReference type="GO" id="GO:0016226">
    <property type="term" value="P:iron-sulfur cluster assembly"/>
    <property type="evidence" value="ECO:0000318"/>
    <property type="project" value="GO_Central"/>
</dbReference>
<dbReference type="CDD" id="cd02037">
    <property type="entry name" value="Mrp_NBP35"/>
    <property type="match status" value="1"/>
</dbReference>
<dbReference type="FunFam" id="3.40.50.300:FF:000427">
    <property type="entry name" value="Cytosolic Fe-S cluster assembly factor NUBP1"/>
    <property type="match status" value="1"/>
</dbReference>
<dbReference type="Gene3D" id="3.40.50.300">
    <property type="entry name" value="P-loop containing nucleotide triphosphate hydrolases"/>
    <property type="match status" value="1"/>
</dbReference>
<dbReference type="HAMAP" id="MF_02040">
    <property type="entry name" value="Mrp_NBP35"/>
    <property type="match status" value="1"/>
</dbReference>
<dbReference type="HAMAP" id="MF_03038">
    <property type="entry name" value="NUBP1"/>
    <property type="match status" value="1"/>
</dbReference>
<dbReference type="InterPro" id="IPR000808">
    <property type="entry name" value="Mrp-like_CS"/>
</dbReference>
<dbReference type="InterPro" id="IPR019591">
    <property type="entry name" value="Mrp/NBP35_ATP-bd"/>
</dbReference>
<dbReference type="InterPro" id="IPR028601">
    <property type="entry name" value="NUBP1/Nbp35"/>
</dbReference>
<dbReference type="InterPro" id="IPR027417">
    <property type="entry name" value="P-loop_NTPase"/>
</dbReference>
<dbReference type="InterPro" id="IPR033756">
    <property type="entry name" value="YlxH/NBP35"/>
</dbReference>
<dbReference type="PANTHER" id="PTHR23264:SF35">
    <property type="entry name" value="CYTOSOLIC FE-S CLUSTER ASSEMBLY FACTOR NUBP1"/>
    <property type="match status" value="1"/>
</dbReference>
<dbReference type="PANTHER" id="PTHR23264">
    <property type="entry name" value="NUCLEOTIDE-BINDING PROTEIN NBP35 YEAST -RELATED"/>
    <property type="match status" value="1"/>
</dbReference>
<dbReference type="Pfam" id="PF10609">
    <property type="entry name" value="ParA"/>
    <property type="match status" value="1"/>
</dbReference>
<dbReference type="SUPFAM" id="SSF52540">
    <property type="entry name" value="P-loop containing nucleoside triphosphate hydrolases"/>
    <property type="match status" value="1"/>
</dbReference>
<dbReference type="PROSITE" id="PS01215">
    <property type="entry name" value="MRP"/>
    <property type="match status" value="1"/>
</dbReference>